<sequence>MSNVVVCALYKFVSLPHFESLREPLLSMMEQADIKGTLLLANEGINGTVAGSQAAIDALLAWLNNQNGLENIVYKLSFDDEMPFYRTKVKLKKEIVTMGVEGIDPLKVVGTYVKPQDWNALISDPEVILVDTRNDYEVQIGTFKNAINPVTETFREFPEYVKQNLDPAKHKKVAMFCTGGIRCEKSTAYLKEQGFEEVYHLEGGILKYLEEVKQEESLWEGECFVFDNRVAVDHDLKKGQYDQCNACRMPITEAEKLSPAYVQGVSCPHCIDKISDEQRKRFVERERQVNLAKSRNEAHIGSDVNQVIEARRQKKEALRQQSAEKNKAKQ</sequence>
<feature type="chain" id="PRO_1000013774" description="tRNA uridine(34) hydroxylase">
    <location>
        <begin position="1"/>
        <end position="330"/>
    </location>
</feature>
<feature type="domain" description="Rhodanese" evidence="1">
    <location>
        <begin position="123"/>
        <end position="217"/>
    </location>
</feature>
<feature type="active site" description="Cysteine persulfide intermediate" evidence="1">
    <location>
        <position position="177"/>
    </location>
</feature>
<protein>
    <recommendedName>
        <fullName evidence="1">tRNA uridine(34) hydroxylase</fullName>
        <ecNumber evidence="1">1.14.-.-</ecNumber>
    </recommendedName>
    <alternativeName>
        <fullName evidence="1">tRNA hydroxylation protein O</fullName>
    </alternativeName>
</protein>
<comment type="function">
    <text evidence="1">Catalyzes oxygen-dependent 5-hydroxyuridine (ho5U) modification at position 34 in tRNAs.</text>
</comment>
<comment type="catalytic activity">
    <reaction evidence="1">
        <text>uridine(34) in tRNA + AH2 + O2 = 5-hydroxyuridine(34) in tRNA + A + H2O</text>
        <dbReference type="Rhea" id="RHEA:64224"/>
        <dbReference type="Rhea" id="RHEA-COMP:11727"/>
        <dbReference type="Rhea" id="RHEA-COMP:13381"/>
        <dbReference type="ChEBI" id="CHEBI:13193"/>
        <dbReference type="ChEBI" id="CHEBI:15377"/>
        <dbReference type="ChEBI" id="CHEBI:15379"/>
        <dbReference type="ChEBI" id="CHEBI:17499"/>
        <dbReference type="ChEBI" id="CHEBI:65315"/>
        <dbReference type="ChEBI" id="CHEBI:136877"/>
    </reaction>
</comment>
<comment type="similarity">
    <text evidence="1">Belongs to the TrhO family.</text>
</comment>
<keyword id="KW-0560">Oxidoreductase</keyword>
<keyword id="KW-0819">tRNA processing</keyword>
<proteinExistence type="inferred from homology"/>
<gene>
    <name evidence="1" type="primary">trhO</name>
    <name type="ordered locus">Shewana3_2261</name>
</gene>
<name>TRHO_SHESA</name>
<evidence type="ECO:0000255" key="1">
    <source>
        <dbReference type="HAMAP-Rule" id="MF_00469"/>
    </source>
</evidence>
<reference key="1">
    <citation type="submission" date="2006-09" db="EMBL/GenBank/DDBJ databases">
        <title>Complete sequence of chromosome 1 of Shewanella sp. ANA-3.</title>
        <authorList>
            <person name="Copeland A."/>
            <person name="Lucas S."/>
            <person name="Lapidus A."/>
            <person name="Barry K."/>
            <person name="Detter J.C."/>
            <person name="Glavina del Rio T."/>
            <person name="Hammon N."/>
            <person name="Israni S."/>
            <person name="Dalin E."/>
            <person name="Tice H."/>
            <person name="Pitluck S."/>
            <person name="Chertkov O."/>
            <person name="Brettin T."/>
            <person name="Bruce D."/>
            <person name="Han C."/>
            <person name="Tapia R."/>
            <person name="Gilna P."/>
            <person name="Schmutz J."/>
            <person name="Larimer F."/>
            <person name="Land M."/>
            <person name="Hauser L."/>
            <person name="Kyrpides N."/>
            <person name="Kim E."/>
            <person name="Newman D."/>
            <person name="Salticov C."/>
            <person name="Konstantinidis K."/>
            <person name="Klappenback J."/>
            <person name="Tiedje J."/>
            <person name="Richardson P."/>
        </authorList>
    </citation>
    <scope>NUCLEOTIDE SEQUENCE [LARGE SCALE GENOMIC DNA]</scope>
    <source>
        <strain>ANA-3</strain>
    </source>
</reference>
<organism>
    <name type="scientific">Shewanella sp. (strain ANA-3)</name>
    <dbReference type="NCBI Taxonomy" id="94122"/>
    <lineage>
        <taxon>Bacteria</taxon>
        <taxon>Pseudomonadati</taxon>
        <taxon>Pseudomonadota</taxon>
        <taxon>Gammaproteobacteria</taxon>
        <taxon>Alteromonadales</taxon>
        <taxon>Shewanellaceae</taxon>
        <taxon>Shewanella</taxon>
    </lineage>
</organism>
<dbReference type="EC" id="1.14.-.-" evidence="1"/>
<dbReference type="EMBL" id="CP000469">
    <property type="protein sequence ID" value="ABK48490.1"/>
    <property type="molecule type" value="Genomic_DNA"/>
</dbReference>
<dbReference type="RefSeq" id="WP_011717209.1">
    <property type="nucleotide sequence ID" value="NC_008577.1"/>
</dbReference>
<dbReference type="SMR" id="A0KXH1"/>
<dbReference type="STRING" id="94122.Shewana3_2261"/>
<dbReference type="KEGG" id="shn:Shewana3_2261"/>
<dbReference type="eggNOG" id="COG1054">
    <property type="taxonomic scope" value="Bacteria"/>
</dbReference>
<dbReference type="HOGENOM" id="CLU_038878_0_0_6"/>
<dbReference type="OrthoDB" id="9778326at2"/>
<dbReference type="Proteomes" id="UP000002589">
    <property type="component" value="Chromosome"/>
</dbReference>
<dbReference type="GO" id="GO:0016705">
    <property type="term" value="F:oxidoreductase activity, acting on paired donors, with incorporation or reduction of molecular oxygen"/>
    <property type="evidence" value="ECO:0007669"/>
    <property type="project" value="UniProtKB-UniRule"/>
</dbReference>
<dbReference type="GO" id="GO:0006400">
    <property type="term" value="P:tRNA modification"/>
    <property type="evidence" value="ECO:0007669"/>
    <property type="project" value="UniProtKB-UniRule"/>
</dbReference>
<dbReference type="CDD" id="cd01518">
    <property type="entry name" value="RHOD_YceA"/>
    <property type="match status" value="1"/>
</dbReference>
<dbReference type="Gene3D" id="3.30.70.100">
    <property type="match status" value="1"/>
</dbReference>
<dbReference type="Gene3D" id="3.40.250.10">
    <property type="entry name" value="Rhodanese-like domain"/>
    <property type="match status" value="1"/>
</dbReference>
<dbReference type="HAMAP" id="MF_00469">
    <property type="entry name" value="TrhO"/>
    <property type="match status" value="1"/>
</dbReference>
<dbReference type="InterPro" id="IPR001763">
    <property type="entry name" value="Rhodanese-like_dom"/>
</dbReference>
<dbReference type="InterPro" id="IPR036873">
    <property type="entry name" value="Rhodanese-like_dom_sf"/>
</dbReference>
<dbReference type="InterPro" id="IPR020936">
    <property type="entry name" value="TrhO"/>
</dbReference>
<dbReference type="InterPro" id="IPR040503">
    <property type="entry name" value="TRHO_N"/>
</dbReference>
<dbReference type="NCBIfam" id="NF001136">
    <property type="entry name" value="PRK00142.1-4"/>
    <property type="match status" value="1"/>
</dbReference>
<dbReference type="PANTHER" id="PTHR43268:SF3">
    <property type="entry name" value="RHODANESE-LIKE DOMAIN-CONTAINING PROTEIN 7-RELATED"/>
    <property type="match status" value="1"/>
</dbReference>
<dbReference type="PANTHER" id="PTHR43268">
    <property type="entry name" value="THIOSULFATE SULFURTRANSFERASE/RHODANESE-LIKE DOMAIN-CONTAINING PROTEIN 2"/>
    <property type="match status" value="1"/>
</dbReference>
<dbReference type="Pfam" id="PF00581">
    <property type="entry name" value="Rhodanese"/>
    <property type="match status" value="1"/>
</dbReference>
<dbReference type="Pfam" id="PF17773">
    <property type="entry name" value="UPF0176_N"/>
    <property type="match status" value="1"/>
</dbReference>
<dbReference type="SMART" id="SM00450">
    <property type="entry name" value="RHOD"/>
    <property type="match status" value="1"/>
</dbReference>
<dbReference type="SUPFAM" id="SSF52821">
    <property type="entry name" value="Rhodanese/Cell cycle control phosphatase"/>
    <property type="match status" value="1"/>
</dbReference>
<dbReference type="PROSITE" id="PS50206">
    <property type="entry name" value="RHODANESE_3"/>
    <property type="match status" value="1"/>
</dbReference>
<accession>A0KXH1</accession>